<sequence length="103" mass="11449">MVKVIDVGRVVVKVLGREAGRKAVVVDIVDENYVVITGPKSLSGVRRRRVNINHIEPTDKKIEIKKGASDEEVLKALEAAGLVEYMKERVKPKLFEITPADVK</sequence>
<protein>
    <recommendedName>
        <fullName evidence="1">Large ribosomal subunit protein eL14</fullName>
    </recommendedName>
    <alternativeName>
        <fullName evidence="2">50S ribosomal protein L14e</fullName>
    </alternativeName>
</protein>
<evidence type="ECO:0000255" key="1">
    <source>
        <dbReference type="HAMAP-Rule" id="MF_00721"/>
    </source>
</evidence>
<evidence type="ECO:0000305" key="2"/>
<dbReference type="EMBL" id="CP000561">
    <property type="protein sequence ID" value="ABO07493.1"/>
    <property type="molecule type" value="Genomic_DNA"/>
</dbReference>
<dbReference type="RefSeq" id="WP_011848750.1">
    <property type="nucleotide sequence ID" value="NC_009073.1"/>
</dbReference>
<dbReference type="PDB" id="9E6Q">
    <property type="method" value="EM"/>
    <property type="resolution" value="1.95 A"/>
    <property type="chains" value="AJ/AK=1-103"/>
</dbReference>
<dbReference type="PDB" id="9E71">
    <property type="method" value="EM"/>
    <property type="resolution" value="2.36 A"/>
    <property type="chains" value="AJ/AK=1-103"/>
</dbReference>
<dbReference type="PDB" id="9E7F">
    <property type="method" value="EM"/>
    <property type="resolution" value="2.53 A"/>
    <property type="chains" value="AJ/AK=1-103"/>
</dbReference>
<dbReference type="PDBsum" id="9E6Q"/>
<dbReference type="PDBsum" id="9E71"/>
<dbReference type="PDBsum" id="9E7F"/>
<dbReference type="EMDB" id="EMD-47578"/>
<dbReference type="EMDB" id="EMD-47628"/>
<dbReference type="EMDB" id="EMD-47668"/>
<dbReference type="SMR" id="A3MS76"/>
<dbReference type="STRING" id="410359.Pcal_0053"/>
<dbReference type="GeneID" id="4910240"/>
<dbReference type="KEGG" id="pcl:Pcal_0053"/>
<dbReference type="eggNOG" id="arCOG04167">
    <property type="taxonomic scope" value="Archaea"/>
</dbReference>
<dbReference type="HOGENOM" id="CLU_183474_0_0_2"/>
<dbReference type="OrthoDB" id="63594at2157"/>
<dbReference type="Proteomes" id="UP000001431">
    <property type="component" value="Chromosome"/>
</dbReference>
<dbReference type="GO" id="GO:0022625">
    <property type="term" value="C:cytosolic large ribosomal subunit"/>
    <property type="evidence" value="ECO:0007669"/>
    <property type="project" value="TreeGrafter"/>
</dbReference>
<dbReference type="GO" id="GO:0003723">
    <property type="term" value="F:RNA binding"/>
    <property type="evidence" value="ECO:0007669"/>
    <property type="project" value="InterPro"/>
</dbReference>
<dbReference type="GO" id="GO:0003735">
    <property type="term" value="F:structural constituent of ribosome"/>
    <property type="evidence" value="ECO:0007669"/>
    <property type="project" value="InterPro"/>
</dbReference>
<dbReference type="GO" id="GO:0042273">
    <property type="term" value="P:ribosomal large subunit biogenesis"/>
    <property type="evidence" value="ECO:0007669"/>
    <property type="project" value="TreeGrafter"/>
</dbReference>
<dbReference type="GO" id="GO:0006412">
    <property type="term" value="P:translation"/>
    <property type="evidence" value="ECO:0007669"/>
    <property type="project" value="UniProtKB-UniRule"/>
</dbReference>
<dbReference type="CDD" id="cd06088">
    <property type="entry name" value="KOW_RPL14"/>
    <property type="match status" value="1"/>
</dbReference>
<dbReference type="FunFam" id="2.30.30.30:FF:000045">
    <property type="entry name" value="50S ribosomal protein L14e"/>
    <property type="match status" value="1"/>
</dbReference>
<dbReference type="Gene3D" id="2.30.30.30">
    <property type="match status" value="1"/>
</dbReference>
<dbReference type="HAMAP" id="MF_00721">
    <property type="entry name" value="Ribosomal_eL14"/>
    <property type="match status" value="1"/>
</dbReference>
<dbReference type="InterPro" id="IPR014722">
    <property type="entry name" value="Rib_uL2_dom2"/>
</dbReference>
<dbReference type="InterPro" id="IPR039660">
    <property type="entry name" value="Ribosomal_eL14"/>
</dbReference>
<dbReference type="InterPro" id="IPR023651">
    <property type="entry name" value="Ribosomal_eL14_arc"/>
</dbReference>
<dbReference type="InterPro" id="IPR041985">
    <property type="entry name" value="Ribosomal_eL14_KOW"/>
</dbReference>
<dbReference type="InterPro" id="IPR008991">
    <property type="entry name" value="Translation_prot_SH3-like_sf"/>
</dbReference>
<dbReference type="NCBIfam" id="NF003320">
    <property type="entry name" value="PRK04333.1"/>
    <property type="match status" value="1"/>
</dbReference>
<dbReference type="PANTHER" id="PTHR11127">
    <property type="entry name" value="60S RIBOSOMAL PROTEIN L14"/>
    <property type="match status" value="1"/>
</dbReference>
<dbReference type="PANTHER" id="PTHR11127:SF2">
    <property type="entry name" value="LARGE RIBOSOMAL SUBUNIT PROTEIN EL14"/>
    <property type="match status" value="1"/>
</dbReference>
<dbReference type="SUPFAM" id="SSF50104">
    <property type="entry name" value="Translation proteins SH3-like domain"/>
    <property type="match status" value="1"/>
</dbReference>
<accession>A3MS76</accession>
<organism>
    <name type="scientific">Pyrobaculum calidifontis (strain DSM 21063 / JCM 11548 / VA1)</name>
    <dbReference type="NCBI Taxonomy" id="410359"/>
    <lineage>
        <taxon>Archaea</taxon>
        <taxon>Thermoproteota</taxon>
        <taxon>Thermoprotei</taxon>
        <taxon>Thermoproteales</taxon>
        <taxon>Thermoproteaceae</taxon>
        <taxon>Pyrobaculum</taxon>
    </lineage>
</organism>
<comment type="similarity">
    <text evidence="1">Belongs to the eukaryotic ribosomal protein eL14 family.</text>
</comment>
<keyword id="KW-0002">3D-structure</keyword>
<keyword id="KW-0687">Ribonucleoprotein</keyword>
<keyword id="KW-0689">Ribosomal protein</keyword>
<gene>
    <name evidence="1" type="primary">rpl14e</name>
    <name type="ordered locus">Pcal_0053</name>
</gene>
<reference key="1">
    <citation type="submission" date="2007-02" db="EMBL/GenBank/DDBJ databases">
        <title>Complete sequence of Pyrobaculum calidifontis JCM 11548.</title>
        <authorList>
            <consortium name="US DOE Joint Genome Institute"/>
            <person name="Copeland A."/>
            <person name="Lucas S."/>
            <person name="Lapidus A."/>
            <person name="Barry K."/>
            <person name="Glavina del Rio T."/>
            <person name="Dalin E."/>
            <person name="Tice H."/>
            <person name="Pitluck S."/>
            <person name="Chain P."/>
            <person name="Malfatti S."/>
            <person name="Shin M."/>
            <person name="Vergez L."/>
            <person name="Schmutz J."/>
            <person name="Larimer F."/>
            <person name="Land M."/>
            <person name="Hauser L."/>
            <person name="Kyrpides N."/>
            <person name="Mikhailova N."/>
            <person name="Cozen A.E."/>
            <person name="Fitz-Gibbon S.T."/>
            <person name="House C.H."/>
            <person name="Saltikov C."/>
            <person name="Lowe T.M."/>
            <person name="Richardson P."/>
        </authorList>
    </citation>
    <scope>NUCLEOTIDE SEQUENCE [LARGE SCALE GENOMIC DNA]</scope>
    <source>
        <strain>DSM 21063 / JCM 11548 / VA1</strain>
    </source>
</reference>
<proteinExistence type="evidence at protein level"/>
<feature type="chain" id="PRO_1000045823" description="Large ribosomal subunit protein eL14">
    <location>
        <begin position="1"/>
        <end position="103"/>
    </location>
</feature>
<name>RL14E_PYRCJ</name>